<keyword id="KW-0472">Membrane</keyword>
<keyword id="KW-1185">Reference proteome</keyword>
<keyword id="KW-0812">Transmembrane</keyword>
<keyword id="KW-1133">Transmembrane helix</keyword>
<sequence>MVNPQVIGYIGAAVASLFFGSNYVPVKNYPTGNGLAFTWVMSVGTLVVAYCAMFISKDYIFDPWGLLGGTLWSIGNFCVIPIVKTIGIGLGLLLWCCSSIITGYFTGKFGWFGIDKQKVSHPALNWIGFACIVAAVIFFFFIEPTIEEKDEHSYSSIVDDSEIGNNGIDNNGYNSINNNNNNGNNKRRSGAFNKQPKKSIFERMPPPYNTILGIVLSVFSGIMYGVNMVPMQLWKQSNVDASPLSFVFCHFSGIFLANTAVFIVYSIIVRPPQIFPQTIFPSFFSGLLWGIANVGLMVATQNLGYTIGFPMGSGGPMIVSSLWSVFYFREIQGVKNLLILLISFIFLGAGITILALSH</sequence>
<reference key="1">
    <citation type="journal article" date="2005" name="Nature">
        <title>The genome of the social amoeba Dictyostelium discoideum.</title>
        <authorList>
            <person name="Eichinger L."/>
            <person name="Pachebat J.A."/>
            <person name="Gloeckner G."/>
            <person name="Rajandream M.A."/>
            <person name="Sucgang R."/>
            <person name="Berriman M."/>
            <person name="Song J."/>
            <person name="Olsen R."/>
            <person name="Szafranski K."/>
            <person name="Xu Q."/>
            <person name="Tunggal B."/>
            <person name="Kummerfeld S."/>
            <person name="Madera M."/>
            <person name="Konfortov B.A."/>
            <person name="Rivero F."/>
            <person name="Bankier A.T."/>
            <person name="Lehmann R."/>
            <person name="Hamlin N."/>
            <person name="Davies R."/>
            <person name="Gaudet P."/>
            <person name="Fey P."/>
            <person name="Pilcher K."/>
            <person name="Chen G."/>
            <person name="Saunders D."/>
            <person name="Sodergren E.J."/>
            <person name="Davis P."/>
            <person name="Kerhornou A."/>
            <person name="Nie X."/>
            <person name="Hall N."/>
            <person name="Anjard C."/>
            <person name="Hemphill L."/>
            <person name="Bason N."/>
            <person name="Farbrother P."/>
            <person name="Desany B."/>
            <person name="Just E."/>
            <person name="Morio T."/>
            <person name="Rost R."/>
            <person name="Churcher C.M."/>
            <person name="Cooper J."/>
            <person name="Haydock S."/>
            <person name="van Driessche N."/>
            <person name="Cronin A."/>
            <person name="Goodhead I."/>
            <person name="Muzny D.M."/>
            <person name="Mourier T."/>
            <person name="Pain A."/>
            <person name="Lu M."/>
            <person name="Harper D."/>
            <person name="Lindsay R."/>
            <person name="Hauser H."/>
            <person name="James K.D."/>
            <person name="Quiles M."/>
            <person name="Madan Babu M."/>
            <person name="Saito T."/>
            <person name="Buchrieser C."/>
            <person name="Wardroper A."/>
            <person name="Felder M."/>
            <person name="Thangavelu M."/>
            <person name="Johnson D."/>
            <person name="Knights A."/>
            <person name="Loulseged H."/>
            <person name="Mungall K.L."/>
            <person name="Oliver K."/>
            <person name="Price C."/>
            <person name="Quail M.A."/>
            <person name="Urushihara H."/>
            <person name="Hernandez J."/>
            <person name="Rabbinowitsch E."/>
            <person name="Steffen D."/>
            <person name="Sanders M."/>
            <person name="Ma J."/>
            <person name="Kohara Y."/>
            <person name="Sharp S."/>
            <person name="Simmonds M.N."/>
            <person name="Spiegler S."/>
            <person name="Tivey A."/>
            <person name="Sugano S."/>
            <person name="White B."/>
            <person name="Walker D."/>
            <person name="Woodward J.R."/>
            <person name="Winckler T."/>
            <person name="Tanaka Y."/>
            <person name="Shaulsky G."/>
            <person name="Schleicher M."/>
            <person name="Weinstock G.M."/>
            <person name="Rosenthal A."/>
            <person name="Cox E.C."/>
            <person name="Chisholm R.L."/>
            <person name="Gibbs R.A."/>
            <person name="Loomis W.F."/>
            <person name="Platzer M."/>
            <person name="Kay R.R."/>
            <person name="Williams J.G."/>
            <person name="Dear P.H."/>
            <person name="Noegel A.A."/>
            <person name="Barrell B.G."/>
            <person name="Kuspa A."/>
        </authorList>
    </citation>
    <scope>NUCLEOTIDE SEQUENCE [LARGE SCALE GENOMIC DNA]</scope>
    <source>
        <strain>AX4</strain>
    </source>
</reference>
<gene>
    <name type="primary">tmem144B</name>
    <name type="ORF">DDB_G0280505</name>
</gene>
<comment type="subcellular location">
    <subcellularLocation>
        <location evidence="2">Membrane</location>
        <topology evidence="2">Multi-pass membrane protein</topology>
    </subcellularLocation>
</comment>
<comment type="similarity">
    <text evidence="2">Belongs to the TMEM144 family.</text>
</comment>
<name>T144B_DICDI</name>
<evidence type="ECO:0000255" key="1"/>
<evidence type="ECO:0000305" key="2"/>
<accession>Q54V96</accession>
<organism>
    <name type="scientific">Dictyostelium discoideum</name>
    <name type="common">Social amoeba</name>
    <dbReference type="NCBI Taxonomy" id="44689"/>
    <lineage>
        <taxon>Eukaryota</taxon>
        <taxon>Amoebozoa</taxon>
        <taxon>Evosea</taxon>
        <taxon>Eumycetozoa</taxon>
        <taxon>Dictyostelia</taxon>
        <taxon>Dictyosteliales</taxon>
        <taxon>Dictyosteliaceae</taxon>
        <taxon>Dictyostelium</taxon>
    </lineage>
</organism>
<proteinExistence type="inferred from homology"/>
<dbReference type="EMBL" id="AAFI02000036">
    <property type="protein sequence ID" value="EAL67232.1"/>
    <property type="molecule type" value="Genomic_DNA"/>
</dbReference>
<dbReference type="FunCoup" id="Q54V96">
    <property type="interactions" value="1"/>
</dbReference>
<dbReference type="TCDB" id="2.A.7.8.2">
    <property type="family name" value="the drug/metabolite transporter (dmt) superfamily"/>
</dbReference>
<dbReference type="PaxDb" id="44689-DDB0304988"/>
<dbReference type="EnsemblProtists" id="EAL67232">
    <property type="protein sequence ID" value="EAL67232"/>
    <property type="gene ID" value="DDB_G0280505"/>
</dbReference>
<dbReference type="KEGG" id="ddi:DDB_G0280505"/>
<dbReference type="dictyBase" id="DDB_G0280505">
    <property type="gene designation" value="tmem144A"/>
</dbReference>
<dbReference type="VEuPathDB" id="AmoebaDB:DDB_G0280505"/>
<dbReference type="eggNOG" id="ENOG502QR0F">
    <property type="taxonomic scope" value="Eukaryota"/>
</dbReference>
<dbReference type="HOGENOM" id="CLU_031844_1_0_1"/>
<dbReference type="InParanoid" id="Q54V96"/>
<dbReference type="OMA" id="FCHFSGI"/>
<dbReference type="PhylomeDB" id="Q54V96"/>
<dbReference type="PRO" id="PR:Q54V96"/>
<dbReference type="Proteomes" id="UP000002195">
    <property type="component" value="Chromosome 3"/>
</dbReference>
<dbReference type="GO" id="GO:0016020">
    <property type="term" value="C:membrane"/>
    <property type="evidence" value="ECO:0007669"/>
    <property type="project" value="UniProtKB-SubCell"/>
</dbReference>
<dbReference type="GO" id="GO:0015144">
    <property type="term" value="F:carbohydrate transmembrane transporter activity"/>
    <property type="evidence" value="ECO:0007669"/>
    <property type="project" value="InterPro"/>
</dbReference>
<dbReference type="InterPro" id="IPR010651">
    <property type="entry name" value="Sugar_transport"/>
</dbReference>
<dbReference type="InterPro" id="IPR012435">
    <property type="entry name" value="TMEM144"/>
</dbReference>
<dbReference type="PANTHER" id="PTHR16119">
    <property type="entry name" value="TRANSMEMBRANE PROTEIN 144"/>
    <property type="match status" value="1"/>
</dbReference>
<dbReference type="PANTHER" id="PTHR16119:SF21">
    <property type="entry name" value="TRANSMEMBRANE PROTEIN 144 HOMOLOG B"/>
    <property type="match status" value="1"/>
</dbReference>
<dbReference type="Pfam" id="PF07857">
    <property type="entry name" value="TMEM144"/>
    <property type="match status" value="1"/>
</dbReference>
<feature type="chain" id="PRO_0000328446" description="Transmembrane protein 144 homolog B">
    <location>
        <begin position="1"/>
        <end position="358"/>
    </location>
</feature>
<feature type="transmembrane region" description="Helical" evidence="1">
    <location>
        <begin position="6"/>
        <end position="26"/>
    </location>
</feature>
<feature type="transmembrane region" description="Helical" evidence="1">
    <location>
        <begin position="35"/>
        <end position="55"/>
    </location>
</feature>
<feature type="transmembrane region" description="Helical" evidence="1">
    <location>
        <begin position="60"/>
        <end position="79"/>
    </location>
</feature>
<feature type="transmembrane region" description="Helical" evidence="1">
    <location>
        <begin position="86"/>
        <end position="108"/>
    </location>
</feature>
<feature type="transmembrane region" description="Helical" evidence="1">
    <location>
        <begin position="122"/>
        <end position="142"/>
    </location>
</feature>
<feature type="transmembrane region" description="Helical" evidence="1">
    <location>
        <begin position="211"/>
        <end position="231"/>
    </location>
</feature>
<feature type="transmembrane region" description="Helical" evidence="1">
    <location>
        <begin position="244"/>
        <end position="264"/>
    </location>
</feature>
<feature type="transmembrane region" description="Helical" evidence="1">
    <location>
        <begin position="279"/>
        <end position="299"/>
    </location>
</feature>
<feature type="transmembrane region" description="Helical" evidence="1">
    <location>
        <begin position="307"/>
        <end position="327"/>
    </location>
</feature>
<feature type="transmembrane region" description="Helical" evidence="1">
    <location>
        <begin position="337"/>
        <end position="357"/>
    </location>
</feature>
<protein>
    <recommendedName>
        <fullName>Transmembrane protein 144 homolog B</fullName>
    </recommendedName>
    <alternativeName>
        <fullName>Transmembrane protein 144 homolog 2</fullName>
    </alternativeName>
</protein>